<keyword id="KW-0067">ATP-binding</keyword>
<keyword id="KW-0460">Magnesium</keyword>
<keyword id="KW-0547">Nucleotide-binding</keyword>
<keyword id="KW-0554">One-carbon metabolism</keyword>
<keyword id="KW-0808">Transferase</keyword>
<proteinExistence type="inferred from homology"/>
<evidence type="ECO:0000255" key="1">
    <source>
        <dbReference type="HAMAP-Rule" id="MF_00136"/>
    </source>
</evidence>
<evidence type="ECO:0000305" key="2"/>
<gene>
    <name evidence="1" type="primary">mat</name>
    <name type="ordered locus">PTO0744</name>
</gene>
<name>METK_PICTO</name>
<protein>
    <recommendedName>
        <fullName evidence="1">S-adenosylmethionine synthase</fullName>
        <shortName evidence="1">AdoMet synthase</shortName>
        <ecNumber evidence="1">2.5.1.6</ecNumber>
    </recommendedName>
    <alternativeName>
        <fullName evidence="1">Methionine adenosyltransferase</fullName>
    </alternativeName>
</protein>
<reference key="1">
    <citation type="journal article" date="2004" name="Proc. Natl. Acad. Sci. U.S.A.">
        <title>Genome sequence of Picrophilus torridus and its implications for life around pH 0.</title>
        <authorList>
            <person name="Fuetterer O."/>
            <person name="Angelov A."/>
            <person name="Liesegang H."/>
            <person name="Gottschalk G."/>
            <person name="Schleper C."/>
            <person name="Schepers B."/>
            <person name="Dock C."/>
            <person name="Antranikian G."/>
            <person name="Liebl W."/>
        </authorList>
    </citation>
    <scope>NUCLEOTIDE SEQUENCE [LARGE SCALE GENOMIC DNA]</scope>
    <source>
        <strain>ATCC 700027 / DSM 9790 / JCM 10055 / NBRC 100828 / KAW 2/3</strain>
    </source>
</reference>
<sequence length="402" mass="44464">METLKTRNIQVEAIKQSPTASREVEIVERKGIGHPDSVADGIAEAVSRSLSKYYIKNYGRILHHNTDQVEVVGGQSDPRFGGGVVLEPSYILISGRATSTVNGERIPVKSIAIKAAKDYLREHFRDLEIDSDVMIDSRIGNGSIDLRGLYDTRKFKANDTSFGVGFAPFTDTETIVKATEKYINGDLKKSLPQIGYDIKVMGFRKNRTINLTVAAAYVDKYVKDPDEYYSVKEELVNKITDNALKYTNNDVQVFVNTGDIKDDKVYYLTVTGLSMENGDDGSVGRGNRVNGLITPYRPMSMEAAAGKNPVTHVGKLYNVLSNIIANDIVKEEGGDIKEVLVRIVSQIGRPVDEPHVASIQVIYEDNVDPSKHKNNITAIADDRIAHISDLTNMFVDGKLDVF</sequence>
<organism>
    <name type="scientific">Picrophilus torridus (strain ATCC 700027 / DSM 9790 / JCM 10055 / NBRC 100828 / KAW 2/3)</name>
    <dbReference type="NCBI Taxonomy" id="1122961"/>
    <lineage>
        <taxon>Archaea</taxon>
        <taxon>Methanobacteriati</taxon>
        <taxon>Thermoplasmatota</taxon>
        <taxon>Thermoplasmata</taxon>
        <taxon>Thermoplasmatales</taxon>
        <taxon>Picrophilaceae</taxon>
        <taxon>Picrophilus</taxon>
    </lineage>
</organism>
<comment type="function">
    <text evidence="1">Catalyzes the formation of S-adenosylmethionine from methionine and ATP.</text>
</comment>
<comment type="catalytic activity">
    <reaction evidence="1">
        <text>L-methionine + ATP + H2O = S-adenosyl-L-methionine + phosphate + diphosphate</text>
        <dbReference type="Rhea" id="RHEA:21080"/>
        <dbReference type="ChEBI" id="CHEBI:15377"/>
        <dbReference type="ChEBI" id="CHEBI:30616"/>
        <dbReference type="ChEBI" id="CHEBI:33019"/>
        <dbReference type="ChEBI" id="CHEBI:43474"/>
        <dbReference type="ChEBI" id="CHEBI:57844"/>
        <dbReference type="ChEBI" id="CHEBI:59789"/>
        <dbReference type="EC" id="2.5.1.6"/>
    </reaction>
</comment>
<comment type="cofactor">
    <cofactor evidence="1">
        <name>Mg(2+)</name>
        <dbReference type="ChEBI" id="CHEBI:18420"/>
    </cofactor>
</comment>
<comment type="pathway">
    <text evidence="1">Amino-acid biosynthesis; S-adenosyl-L-methionine biosynthesis; S-adenosyl-L-methionine from L-methionine: step 1/1.</text>
</comment>
<comment type="similarity">
    <text evidence="1">Belongs to the AdoMet synthase 2 family.</text>
</comment>
<comment type="sequence caution" evidence="2">
    <conflict type="erroneous initiation">
        <sequence resource="EMBL-CDS" id="AAT43329"/>
    </conflict>
</comment>
<accession>Q6L123</accession>
<feature type="chain" id="PRO_0000150034" description="S-adenosylmethionine synthase">
    <location>
        <begin position="1"/>
        <end position="402"/>
    </location>
</feature>
<feature type="binding site" evidence="1">
    <location>
        <begin position="140"/>
        <end position="145"/>
    </location>
    <ligand>
        <name>ATP</name>
        <dbReference type="ChEBI" id="CHEBI:30616"/>
    </ligand>
</feature>
<dbReference type="EC" id="2.5.1.6" evidence="1"/>
<dbReference type="EMBL" id="AE017261">
    <property type="protein sequence ID" value="AAT43329.1"/>
    <property type="status" value="ALT_INIT"/>
    <property type="molecule type" value="Genomic_DNA"/>
</dbReference>
<dbReference type="RefSeq" id="WP_048059597.1">
    <property type="nucleotide sequence ID" value="NC_005877.1"/>
</dbReference>
<dbReference type="SMR" id="Q6L123"/>
<dbReference type="FunCoup" id="Q6L123">
    <property type="interactions" value="139"/>
</dbReference>
<dbReference type="STRING" id="263820.PTO0744"/>
<dbReference type="PaxDb" id="263820-PTO0744"/>
<dbReference type="GeneID" id="2845125"/>
<dbReference type="KEGG" id="pto:PTO0744"/>
<dbReference type="PATRIC" id="fig|263820.9.peg.779"/>
<dbReference type="eggNOG" id="arCOG01678">
    <property type="taxonomic scope" value="Archaea"/>
</dbReference>
<dbReference type="HOGENOM" id="CLU_057642_0_0_2"/>
<dbReference type="InParanoid" id="Q6L123"/>
<dbReference type="OrthoDB" id="204488at2157"/>
<dbReference type="UniPathway" id="UPA00315">
    <property type="reaction ID" value="UER00080"/>
</dbReference>
<dbReference type="Proteomes" id="UP000000438">
    <property type="component" value="Chromosome"/>
</dbReference>
<dbReference type="GO" id="GO:0005524">
    <property type="term" value="F:ATP binding"/>
    <property type="evidence" value="ECO:0007669"/>
    <property type="project" value="UniProtKB-UniRule"/>
</dbReference>
<dbReference type="GO" id="GO:0000287">
    <property type="term" value="F:magnesium ion binding"/>
    <property type="evidence" value="ECO:0007669"/>
    <property type="project" value="UniProtKB-UniRule"/>
</dbReference>
<dbReference type="GO" id="GO:0004478">
    <property type="term" value="F:methionine adenosyltransferase activity"/>
    <property type="evidence" value="ECO:0007669"/>
    <property type="project" value="UniProtKB-UniRule"/>
</dbReference>
<dbReference type="GO" id="GO:0006730">
    <property type="term" value="P:one-carbon metabolic process"/>
    <property type="evidence" value="ECO:0007669"/>
    <property type="project" value="UniProtKB-KW"/>
</dbReference>
<dbReference type="GO" id="GO:0006556">
    <property type="term" value="P:S-adenosylmethionine biosynthetic process"/>
    <property type="evidence" value="ECO:0007669"/>
    <property type="project" value="UniProtKB-UniRule"/>
</dbReference>
<dbReference type="Gene3D" id="3.30.300.10">
    <property type="match status" value="1"/>
</dbReference>
<dbReference type="Gene3D" id="3.30.300.280">
    <property type="entry name" value="S-adenosylmethionine synthetase, C-terminal domain"/>
    <property type="match status" value="1"/>
</dbReference>
<dbReference type="Gene3D" id="3.30.300.340">
    <property type="entry name" value="S-adenosylmethionine synthetase, N-terminal domain"/>
    <property type="match status" value="1"/>
</dbReference>
<dbReference type="HAMAP" id="MF_00136">
    <property type="entry name" value="S_AdoMet_synth2"/>
    <property type="match status" value="1"/>
</dbReference>
<dbReference type="InterPro" id="IPR042543">
    <property type="entry name" value="AdoMet_synthase_2"/>
</dbReference>
<dbReference type="InterPro" id="IPR027790">
    <property type="entry name" value="AdoMet_synthase_2_family"/>
</dbReference>
<dbReference type="InterPro" id="IPR042544">
    <property type="entry name" value="AdoMet_synthase_3"/>
</dbReference>
<dbReference type="InterPro" id="IPR002795">
    <property type="entry name" value="S-AdoMet_synthetase_arc"/>
</dbReference>
<dbReference type="NCBIfam" id="NF003364">
    <property type="entry name" value="PRK04439.1-3"/>
    <property type="match status" value="1"/>
</dbReference>
<dbReference type="NCBIfam" id="NF003366">
    <property type="entry name" value="PRK04439.1-5"/>
    <property type="match status" value="1"/>
</dbReference>
<dbReference type="PANTHER" id="PTHR36697">
    <property type="entry name" value="S-ADENOSYLMETHIONINE SYNTHASE"/>
    <property type="match status" value="1"/>
</dbReference>
<dbReference type="PANTHER" id="PTHR36697:SF1">
    <property type="entry name" value="S-ADENOSYLMETHIONINE SYNTHASE"/>
    <property type="match status" value="1"/>
</dbReference>
<dbReference type="Pfam" id="PF01941">
    <property type="entry name" value="AdoMet_Synthase"/>
    <property type="match status" value="1"/>
</dbReference>